<feature type="chain" id="PRO_1000031183" description="Ribonuclease HII">
    <location>
        <begin position="1"/>
        <end position="207"/>
    </location>
</feature>
<feature type="domain" description="RNase H type-2" evidence="2">
    <location>
        <begin position="12"/>
        <end position="201"/>
    </location>
</feature>
<feature type="binding site" evidence="1">
    <location>
        <position position="18"/>
    </location>
    <ligand>
        <name>a divalent metal cation</name>
        <dbReference type="ChEBI" id="CHEBI:60240"/>
    </ligand>
</feature>
<feature type="binding site" evidence="1">
    <location>
        <position position="19"/>
    </location>
    <ligand>
        <name>a divalent metal cation</name>
        <dbReference type="ChEBI" id="CHEBI:60240"/>
    </ligand>
</feature>
<feature type="binding site" evidence="1">
    <location>
        <position position="110"/>
    </location>
    <ligand>
        <name>a divalent metal cation</name>
        <dbReference type="ChEBI" id="CHEBI:60240"/>
    </ligand>
</feature>
<reference key="1">
    <citation type="submission" date="2007-05" db="EMBL/GenBank/DDBJ databases">
        <title>Complete sequence of Pseudomonas putida F1.</title>
        <authorList>
            <consortium name="US DOE Joint Genome Institute"/>
            <person name="Copeland A."/>
            <person name="Lucas S."/>
            <person name="Lapidus A."/>
            <person name="Barry K."/>
            <person name="Detter J.C."/>
            <person name="Glavina del Rio T."/>
            <person name="Hammon N."/>
            <person name="Israni S."/>
            <person name="Dalin E."/>
            <person name="Tice H."/>
            <person name="Pitluck S."/>
            <person name="Chain P."/>
            <person name="Malfatti S."/>
            <person name="Shin M."/>
            <person name="Vergez L."/>
            <person name="Schmutz J."/>
            <person name="Larimer F."/>
            <person name="Land M."/>
            <person name="Hauser L."/>
            <person name="Kyrpides N."/>
            <person name="Lykidis A."/>
            <person name="Parales R."/>
            <person name="Richardson P."/>
        </authorList>
    </citation>
    <scope>NUCLEOTIDE SEQUENCE [LARGE SCALE GENOMIC DNA]</scope>
    <source>
        <strain>ATCC 700007 / DSM 6899 / JCM 31910 / BCRC 17059 / LMG 24140 / F1</strain>
    </source>
</reference>
<sequence>MQIGLDFNLVEDLVAGVDEVGRGPLCGAVVTAAVILDPARPILGLNDSKKLTEARREALFDEICEKALSFCIARAEVEEIDSLNILQATMLAMQRAVEGLHITPKLALIDGNRCPKLAVPAAPVVKGDSQVPAIAAASILAKVTRDREMSAFELIYPGYGIGGHKGYPTPVHLEALARLGPTPIHRRSFAPVRAAWEVREGVTDSLI</sequence>
<proteinExistence type="inferred from homology"/>
<protein>
    <recommendedName>
        <fullName evidence="1">Ribonuclease HII</fullName>
        <shortName evidence="1">RNase HII</shortName>
        <ecNumber evidence="1">3.1.26.4</ecNumber>
    </recommendedName>
</protein>
<name>RNH2_PSEP1</name>
<dbReference type="EC" id="3.1.26.4" evidence="1"/>
<dbReference type="EMBL" id="CP000712">
    <property type="protein sequence ID" value="ABQ80296.1"/>
    <property type="molecule type" value="Genomic_DNA"/>
</dbReference>
<dbReference type="SMR" id="A5W836"/>
<dbReference type="KEGG" id="ppf:Pput_4172"/>
<dbReference type="eggNOG" id="COG0164">
    <property type="taxonomic scope" value="Bacteria"/>
</dbReference>
<dbReference type="HOGENOM" id="CLU_036532_3_2_6"/>
<dbReference type="GO" id="GO:0005737">
    <property type="term" value="C:cytoplasm"/>
    <property type="evidence" value="ECO:0007669"/>
    <property type="project" value="UniProtKB-SubCell"/>
</dbReference>
<dbReference type="GO" id="GO:0032299">
    <property type="term" value="C:ribonuclease H2 complex"/>
    <property type="evidence" value="ECO:0007669"/>
    <property type="project" value="TreeGrafter"/>
</dbReference>
<dbReference type="GO" id="GO:0030145">
    <property type="term" value="F:manganese ion binding"/>
    <property type="evidence" value="ECO:0007669"/>
    <property type="project" value="UniProtKB-UniRule"/>
</dbReference>
<dbReference type="GO" id="GO:0003723">
    <property type="term" value="F:RNA binding"/>
    <property type="evidence" value="ECO:0007669"/>
    <property type="project" value="InterPro"/>
</dbReference>
<dbReference type="GO" id="GO:0004523">
    <property type="term" value="F:RNA-DNA hybrid ribonuclease activity"/>
    <property type="evidence" value="ECO:0007669"/>
    <property type="project" value="UniProtKB-UniRule"/>
</dbReference>
<dbReference type="GO" id="GO:0043137">
    <property type="term" value="P:DNA replication, removal of RNA primer"/>
    <property type="evidence" value="ECO:0007669"/>
    <property type="project" value="TreeGrafter"/>
</dbReference>
<dbReference type="GO" id="GO:0006298">
    <property type="term" value="P:mismatch repair"/>
    <property type="evidence" value="ECO:0007669"/>
    <property type="project" value="TreeGrafter"/>
</dbReference>
<dbReference type="CDD" id="cd07182">
    <property type="entry name" value="RNase_HII_bacteria_HII_like"/>
    <property type="match status" value="1"/>
</dbReference>
<dbReference type="FunFam" id="3.30.420.10:FF:000006">
    <property type="entry name" value="Ribonuclease HII"/>
    <property type="match status" value="1"/>
</dbReference>
<dbReference type="Gene3D" id="3.30.420.10">
    <property type="entry name" value="Ribonuclease H-like superfamily/Ribonuclease H"/>
    <property type="match status" value="1"/>
</dbReference>
<dbReference type="HAMAP" id="MF_00052_B">
    <property type="entry name" value="RNase_HII_B"/>
    <property type="match status" value="1"/>
</dbReference>
<dbReference type="InterPro" id="IPR022898">
    <property type="entry name" value="RNase_HII"/>
</dbReference>
<dbReference type="InterPro" id="IPR001352">
    <property type="entry name" value="RNase_HII/HIII"/>
</dbReference>
<dbReference type="InterPro" id="IPR024567">
    <property type="entry name" value="RNase_HII/HIII_dom"/>
</dbReference>
<dbReference type="InterPro" id="IPR012337">
    <property type="entry name" value="RNaseH-like_sf"/>
</dbReference>
<dbReference type="InterPro" id="IPR036397">
    <property type="entry name" value="RNaseH_sf"/>
</dbReference>
<dbReference type="NCBIfam" id="NF000595">
    <property type="entry name" value="PRK00015.1-3"/>
    <property type="match status" value="1"/>
</dbReference>
<dbReference type="NCBIfam" id="NF000596">
    <property type="entry name" value="PRK00015.1-4"/>
    <property type="match status" value="1"/>
</dbReference>
<dbReference type="PANTHER" id="PTHR10954">
    <property type="entry name" value="RIBONUCLEASE H2 SUBUNIT A"/>
    <property type="match status" value="1"/>
</dbReference>
<dbReference type="PANTHER" id="PTHR10954:SF18">
    <property type="entry name" value="RIBONUCLEASE HII"/>
    <property type="match status" value="1"/>
</dbReference>
<dbReference type="Pfam" id="PF01351">
    <property type="entry name" value="RNase_HII"/>
    <property type="match status" value="1"/>
</dbReference>
<dbReference type="SUPFAM" id="SSF53098">
    <property type="entry name" value="Ribonuclease H-like"/>
    <property type="match status" value="1"/>
</dbReference>
<dbReference type="PROSITE" id="PS51975">
    <property type="entry name" value="RNASE_H_2"/>
    <property type="match status" value="1"/>
</dbReference>
<keyword id="KW-0963">Cytoplasm</keyword>
<keyword id="KW-0255">Endonuclease</keyword>
<keyword id="KW-0378">Hydrolase</keyword>
<keyword id="KW-0464">Manganese</keyword>
<keyword id="KW-0479">Metal-binding</keyword>
<keyword id="KW-0540">Nuclease</keyword>
<comment type="function">
    <text evidence="1">Endonuclease that specifically degrades the RNA of RNA-DNA hybrids.</text>
</comment>
<comment type="catalytic activity">
    <reaction evidence="1">
        <text>Endonucleolytic cleavage to 5'-phosphomonoester.</text>
        <dbReference type="EC" id="3.1.26.4"/>
    </reaction>
</comment>
<comment type="cofactor">
    <cofactor evidence="1">
        <name>Mn(2+)</name>
        <dbReference type="ChEBI" id="CHEBI:29035"/>
    </cofactor>
    <cofactor evidence="1">
        <name>Mg(2+)</name>
        <dbReference type="ChEBI" id="CHEBI:18420"/>
    </cofactor>
    <text evidence="1">Manganese or magnesium. Binds 1 divalent metal ion per monomer in the absence of substrate. May bind a second metal ion after substrate binding.</text>
</comment>
<comment type="subcellular location">
    <subcellularLocation>
        <location evidence="1">Cytoplasm</location>
    </subcellularLocation>
</comment>
<comment type="similarity">
    <text evidence="1">Belongs to the RNase HII family.</text>
</comment>
<gene>
    <name evidence="1" type="primary">rnhB</name>
    <name type="ordered locus">Pput_4172</name>
</gene>
<evidence type="ECO:0000255" key="1">
    <source>
        <dbReference type="HAMAP-Rule" id="MF_00052"/>
    </source>
</evidence>
<evidence type="ECO:0000255" key="2">
    <source>
        <dbReference type="PROSITE-ProRule" id="PRU01319"/>
    </source>
</evidence>
<accession>A5W836</accession>
<organism>
    <name type="scientific">Pseudomonas putida (strain ATCC 700007 / DSM 6899 / JCM 31910 / BCRC 17059 / LMG 24140 / F1)</name>
    <dbReference type="NCBI Taxonomy" id="351746"/>
    <lineage>
        <taxon>Bacteria</taxon>
        <taxon>Pseudomonadati</taxon>
        <taxon>Pseudomonadota</taxon>
        <taxon>Gammaproteobacteria</taxon>
        <taxon>Pseudomonadales</taxon>
        <taxon>Pseudomonadaceae</taxon>
        <taxon>Pseudomonas</taxon>
    </lineage>
</organism>